<organism>
    <name type="scientific">Influenza A virus (strain A/USA:Huston/AA/1945 H1N1)</name>
    <dbReference type="NCBI Taxonomy" id="425551"/>
    <lineage>
        <taxon>Viruses</taxon>
        <taxon>Riboviria</taxon>
        <taxon>Orthornavirae</taxon>
        <taxon>Negarnaviricota</taxon>
        <taxon>Polyploviricotina</taxon>
        <taxon>Insthoviricetes</taxon>
        <taxon>Articulavirales</taxon>
        <taxon>Orthomyxoviridae</taxon>
        <taxon>Alphainfluenzavirus</taxon>
        <taxon>Alphainfluenzavirus influenzae</taxon>
        <taxon>Influenza A virus</taxon>
    </lineage>
</organism>
<organismHost>
    <name type="scientific">Aves</name>
    <dbReference type="NCBI Taxonomy" id="8782"/>
</organismHost>
<organismHost>
    <name type="scientific">Homo sapiens</name>
    <name type="common">Human</name>
    <dbReference type="NCBI Taxonomy" id="9606"/>
</organismHost>
<organismHost>
    <name type="scientific">Sus scrofa</name>
    <name type="common">Pig</name>
    <dbReference type="NCBI Taxonomy" id="9823"/>
</organismHost>
<reference key="1">
    <citation type="submission" date="2007-04" db="EMBL/GenBank/DDBJ databases">
        <title>The NIAID influenza genome sequencing project.</title>
        <authorList>
            <person name="Ghedin E."/>
            <person name="Spiro D."/>
            <person name="Miller N."/>
            <person name="Zaborsky J."/>
            <person name="Feldblyum T."/>
            <person name="Subbu V."/>
            <person name="Shumway M."/>
            <person name="Sparenborg J."/>
            <person name="Groveman L."/>
            <person name="Halpin R."/>
            <person name="Sitz J."/>
            <person name="Koo H."/>
            <person name="Salzberg S.L."/>
            <person name="Webster R.G."/>
            <person name="Hoffmann E."/>
            <person name="Krauss S."/>
            <person name="Naeve C."/>
            <person name="Bao Y."/>
            <person name="Bolotov P."/>
            <person name="Dernovoy D."/>
            <person name="Kiryutin B."/>
            <person name="Lipman D.J."/>
            <person name="Tatusova T."/>
        </authorList>
    </citation>
    <scope>NUCLEOTIDE SEQUENCE [GENOMIC RNA]</scope>
</reference>
<reference key="2">
    <citation type="submission" date="2007-04" db="EMBL/GenBank/DDBJ databases">
        <authorList>
            <consortium name="The NIAID Influenza Genome Sequencing Consortium"/>
        </authorList>
    </citation>
    <scope>NUCLEOTIDE SEQUENCE [GENOMIC RNA]</scope>
</reference>
<dbReference type="EMBL" id="CY021713">
    <property type="protein sequence ID" value="ABP49333.1"/>
    <property type="molecule type" value="Viral_cRNA"/>
</dbReference>
<dbReference type="SMR" id="A4U6V7"/>
<dbReference type="Proteomes" id="UP000008433">
    <property type="component" value="Genome"/>
</dbReference>
<dbReference type="GO" id="GO:0042025">
    <property type="term" value="C:host cell nucleus"/>
    <property type="evidence" value="ECO:0007669"/>
    <property type="project" value="UniProtKB-SubCell"/>
</dbReference>
<dbReference type="GO" id="GO:0044423">
    <property type="term" value="C:virion component"/>
    <property type="evidence" value="ECO:0007669"/>
    <property type="project" value="UniProtKB-UniRule"/>
</dbReference>
<dbReference type="GO" id="GO:0039675">
    <property type="term" value="P:exit of virus from host cell nucleus through nuclear pore"/>
    <property type="evidence" value="ECO:0007669"/>
    <property type="project" value="UniProtKB-UniRule"/>
</dbReference>
<dbReference type="Gene3D" id="1.10.287.230">
    <property type="match status" value="1"/>
</dbReference>
<dbReference type="Gene3D" id="1.10.287.10">
    <property type="entry name" value="S15/NS1, RNA-binding"/>
    <property type="match status" value="1"/>
</dbReference>
<dbReference type="HAMAP" id="MF_04067">
    <property type="entry name" value="INFV_NEP"/>
    <property type="match status" value="1"/>
</dbReference>
<dbReference type="InterPro" id="IPR000968">
    <property type="entry name" value="Flu_NS2"/>
</dbReference>
<dbReference type="Pfam" id="PF00601">
    <property type="entry name" value="Flu_NS2"/>
    <property type="match status" value="1"/>
</dbReference>
<dbReference type="SUPFAM" id="SSF101156">
    <property type="entry name" value="Nonstructural protein ns2, Nep, M1-binding domain"/>
    <property type="match status" value="1"/>
</dbReference>
<keyword id="KW-0025">Alternative splicing</keyword>
<keyword id="KW-1048">Host nucleus</keyword>
<keyword id="KW-0945">Host-virus interaction</keyword>
<keyword id="KW-0813">Transport</keyword>
<keyword id="KW-0946">Virion</keyword>
<feature type="chain" id="PRO_0000372952" description="Nuclear export protein">
    <location>
        <begin position="1"/>
        <end position="121"/>
    </location>
</feature>
<feature type="short sequence motif" description="Nuclear export signal" evidence="1">
    <location>
        <begin position="12"/>
        <end position="21"/>
    </location>
</feature>
<feature type="short sequence motif" description="Nuclear export signal" evidence="1">
    <location>
        <begin position="85"/>
        <end position="94"/>
    </location>
</feature>
<protein>
    <recommendedName>
        <fullName evidence="1">Nuclear export protein</fullName>
        <shortName evidence="1">NEP</shortName>
    </recommendedName>
    <alternativeName>
        <fullName evidence="1">Non-structural protein 2</fullName>
        <shortName evidence="1">NS2</shortName>
    </alternativeName>
</protein>
<accession>A4U6V7</accession>
<comment type="function">
    <text evidence="1">Mediates the nuclear export of encapsidated genomic RNAs (ribonucleoproteins, RNPs). Acts as an adapter between viral RNPs complexes and the nuclear export machinery of the cell. Possesses no intrinsic RNA-binding activity, but includes a C-terminal M1-binding domain. This domain is believed to allow recognition of RNPs bound to the protein M1. Since protein M1 is not available in large quantities before late stages of infection, such an indirect recognition mechanism probably ensures that genomic RNPs are not exported from the host nucleus until sufficient quantities of viral mRNA and progeny genomic RNA have been synthesized. Furthermore, the RNPs enter the host cytoplasm only when associated with the M1 protein that is necessary to guide them to the plasma membrane. May down-regulate viral RNA synthesis when overproduced.</text>
</comment>
<comment type="subunit">
    <text evidence="1">Interacts with protein M1. May interact with host nucleoporin RAB/HRB and exportin XPO1/CRM1.</text>
</comment>
<comment type="subcellular location">
    <subcellularLocation>
        <location evidence="1">Virion</location>
    </subcellularLocation>
    <subcellularLocation>
        <location evidence="1">Host nucleus</location>
    </subcellularLocation>
</comment>
<comment type="alternative products">
    <event type="alternative splicing"/>
    <isoform>
        <id>A4U6V7-1</id>
        <name>NEP</name>
        <name>NS2</name>
        <sequence type="displayed"/>
    </isoform>
    <isoform>
        <id>A4U6V8-1</id>
        <name>NS1</name>
        <sequence type="external"/>
    </isoform>
</comment>
<comment type="miscellaneous">
    <text>Average number present in a viral particle is estimated to be 130-200 molecules.</text>
</comment>
<comment type="similarity">
    <text evidence="1">Belongs to the influenza viruses NEP family.</text>
</comment>
<proteinExistence type="inferred from homology"/>
<gene>
    <name evidence="1" type="primary">NS</name>
</gene>
<sequence length="121" mass="14345">MDPNTVSSFQDILMRMSKMQLGSSSEDLNGMITQFESLKLYRDSLGEAVMRMGDLHSLQNRNGKWREQLGQKFEEIRWLIEEVRHRLKITENSFEQITFMQALQLLLEVEQEIRTFSFQLI</sequence>
<evidence type="ECO:0000255" key="1">
    <source>
        <dbReference type="HAMAP-Rule" id="MF_04067"/>
    </source>
</evidence>
<name>NEP_I45A0</name>